<accession>Q1XG90</accession>
<feature type="signal peptide" evidence="3">
    <location>
        <begin position="1"/>
        <end position="18"/>
    </location>
</feature>
<feature type="chain" id="PRO_0000280510" description="Lysozyme 2" evidence="3">
    <location>
        <begin position="19"/>
        <end position="135"/>
    </location>
</feature>
<feature type="domain" description="I-type lysozyme" evidence="2">
    <location>
        <begin position="19"/>
        <end position="135"/>
    </location>
</feature>
<feature type="active site" description="Proton donor" evidence="2">
    <location>
        <position position="32"/>
    </location>
</feature>
<feature type="active site" description="Nucleophile" evidence="2">
    <location>
        <position position="43"/>
    </location>
</feature>
<feature type="binding site" evidence="1">
    <location>
        <begin position="55"/>
        <end position="61"/>
    </location>
    <ligand>
        <name>substrate</name>
    </ligand>
</feature>
<feature type="binding site" evidence="1">
    <location>
        <position position="86"/>
    </location>
    <ligand>
        <name>substrate</name>
    </ligand>
</feature>
<feature type="binding site" evidence="1">
    <location>
        <begin position="107"/>
        <end position="109"/>
    </location>
    <ligand>
        <name>substrate</name>
    </ligand>
</feature>
<feature type="disulfide bond" evidence="2">
    <location>
        <begin position="24"/>
        <end position="100"/>
    </location>
</feature>
<feature type="disulfide bond" evidence="2">
    <location>
        <begin position="29"/>
        <end position="35"/>
    </location>
</feature>
<feature type="disulfide bond" evidence="2">
    <location>
        <begin position="40"/>
        <end position="49"/>
    </location>
</feature>
<feature type="disulfide bond" evidence="2">
    <location>
        <begin position="62"/>
        <end position="82"/>
    </location>
</feature>
<feature type="disulfide bond" evidence="2">
    <location>
        <begin position="72"/>
        <end position="78"/>
    </location>
</feature>
<feature type="disulfide bond" evidence="2">
    <location>
        <begin position="96"/>
        <end position="114"/>
    </location>
</feature>
<name>LYS2_CRAVI</name>
<sequence length="135" mass="14950">MNFLILFCVVASASVVYSSISDQCLRCICEVESGCRAIGCHWDVYSNSCGYFQIKQGYWTDCGSPGHSMESCADNYNCASGCVRSYMDHYIKYNGCADTCESYARMHNGGPNGCKSSHHHATDNYWRLVQAKGCS</sequence>
<protein>
    <recommendedName>
        <fullName>Lysozyme 2</fullName>
        <ecNumber evidence="3">3.2.1.17</ecNumber>
    </recommendedName>
    <alternativeName>
        <fullName>1,4-beta-N-acetylmuramidase 2</fullName>
    </alternativeName>
    <alternativeName>
        <fullName evidence="4">Invertebrate-type lysozyme 2</fullName>
    </alternativeName>
    <alternativeName>
        <fullName>cv-lysozyme 2</fullName>
    </alternativeName>
</protein>
<reference evidence="4 5" key="1">
    <citation type="journal article" date="2007" name="Cell. Mol. Life Sci.">
        <title>A new lysozyme from the eastern oyster (Crassostrea virginica) indicates adaptive evolution of i-type lysozymes.</title>
        <authorList>
            <person name="Xue Q.-G."/>
            <person name="Itoh N."/>
            <person name="Schey K.L."/>
            <person name="Li Y.-L."/>
            <person name="Cooper R.K."/>
            <person name="La Peyre J.F."/>
        </authorList>
    </citation>
    <scope>NUCLEOTIDE SEQUENCE [MRNA]</scope>
    <scope>PROTEIN SEQUENCE OF 19-105 AND 116-135</scope>
    <scope>FUNCTION</scope>
    <scope>CATALYTIC ACTIVITY</scope>
    <scope>ACTIVITY REGULATION</scope>
    <scope>BIOPHYSICOCHEMICAL PROPERTIES</scope>
    <scope>TISSUE SPECIFICITY</scope>
    <scope>MASS SPECTROMETRY</scope>
    <source>
        <tissue evidence="5">Digestive gland</tissue>
    </source>
</reference>
<evidence type="ECO:0000250" key="1">
    <source>
        <dbReference type="UniProtKB" id="Q8IU26"/>
    </source>
</evidence>
<evidence type="ECO:0000255" key="2">
    <source>
        <dbReference type="PROSITE-ProRule" id="PRU01257"/>
    </source>
</evidence>
<evidence type="ECO:0000269" key="3">
    <source>
    </source>
</evidence>
<evidence type="ECO:0000305" key="4"/>
<evidence type="ECO:0000312" key="5">
    <source>
        <dbReference type="EMBL" id="BAE93114.1"/>
    </source>
</evidence>
<keyword id="KW-0044">Antibiotic</keyword>
<keyword id="KW-0929">Antimicrobial</keyword>
<keyword id="KW-0081">Bacteriolytic enzyme</keyword>
<keyword id="KW-0903">Direct protein sequencing</keyword>
<keyword id="KW-1015">Disulfide bond</keyword>
<keyword id="KW-0326">Glycosidase</keyword>
<keyword id="KW-0378">Hydrolase</keyword>
<keyword id="KW-0964">Secreted</keyword>
<keyword id="KW-0732">Signal</keyword>
<proteinExistence type="evidence at protein level"/>
<comment type="function">
    <text evidence="3">The main role of this lysozyme is in digestion. Has antibacterial activity against the Gram-positive bacterium P.cerevisiae and the Gram-negative bacteria E.coli and V.vulnificus. Shows some chitinase activity but no isopeptidase activity.</text>
</comment>
<comment type="catalytic activity">
    <reaction evidence="3">
        <text>Hydrolysis of (1-&gt;4)-beta-linkages between N-acetylmuramic acid and N-acetyl-D-glucosamine residues in a peptidoglycan and between N-acetyl-D-glucosamine residues in chitodextrins.</text>
        <dbReference type="EC" id="3.2.1.17"/>
    </reaction>
</comment>
<comment type="activity regulation">
    <text evidence="3">Activity decreased by 80% by addition of 0.01 M calcium, zinc or magnesium. Activity only decreased by 17% by addition of ammonium, and by 2% by addition of sodium.</text>
</comment>
<comment type="biophysicochemical properties">
    <phDependence>
        <text evidence="3">Retains more than 90% of its maximum activity between pH 5.4 and 6.4 in the ionic strength range of I=0.005-0.01. In buffers of I=0.005 more than 75% of maximum activity is retained between pH 5.3 and 7.5. In buffers of I=0.02 more than 75% of maximum activity is retained between pH 5.3 and 6.5.</text>
    </phDependence>
    <temperatureDependence>
        <text evidence="3">Optimum temperature is 55 degrees Celsius. No decrease in activity was detected after incubation at 30 degrees Celsius for 30 minutes. No activity could be detected after incubation at 90 degrees Celsius for 30 minutes or 100 degrees Celsius for 10 minutes.</text>
    </temperatureDependence>
</comment>
<comment type="subcellular location">
    <subcellularLocation>
        <location>Secreted</location>
    </subcellularLocation>
</comment>
<comment type="tissue specificity">
    <text evidence="3">Expressed in the epithelia of the basophil cells in the digestive tubules, but not in the epithelial cells lining the digestive ducts and stomach. Expressed at a much lower level in the style sac-midgut tissues. No expression detected in mantle, gills, labial palps or hemocytes.</text>
</comment>
<comment type="mass spectrometry" mass="12984.6" method="MALDI" evidence="3"/>
<comment type="similarity">
    <text evidence="2">Belongs to the glycosyl hydrolase 22 family. Type-I lysozyme subfamily.</text>
</comment>
<organism>
    <name type="scientific">Crassostrea virginica</name>
    <name type="common">Eastern oyster</name>
    <dbReference type="NCBI Taxonomy" id="6565"/>
    <lineage>
        <taxon>Eukaryota</taxon>
        <taxon>Metazoa</taxon>
        <taxon>Spiralia</taxon>
        <taxon>Lophotrochozoa</taxon>
        <taxon>Mollusca</taxon>
        <taxon>Bivalvia</taxon>
        <taxon>Autobranchia</taxon>
        <taxon>Pteriomorphia</taxon>
        <taxon>Ostreida</taxon>
        <taxon>Ostreoidea</taxon>
        <taxon>Ostreidae</taxon>
        <taxon>Crassostrea</taxon>
    </lineage>
</organism>
<dbReference type="EC" id="3.2.1.17" evidence="3"/>
<dbReference type="EMBL" id="AB252064">
    <property type="protein sequence ID" value="BAE93114.1"/>
    <property type="molecule type" value="mRNA"/>
</dbReference>
<dbReference type="SMR" id="Q1XG90"/>
<dbReference type="CAZy" id="GH22">
    <property type="family name" value="Glycoside Hydrolase Family 22"/>
</dbReference>
<dbReference type="EnsemblMetazoa" id="XM_022488230.1">
    <property type="protein sequence ID" value="XP_022343938.1"/>
    <property type="gene ID" value="LOC111137008"/>
</dbReference>
<dbReference type="OrthoDB" id="6337871at2759"/>
<dbReference type="GO" id="GO:0005576">
    <property type="term" value="C:extracellular region"/>
    <property type="evidence" value="ECO:0007669"/>
    <property type="project" value="UniProtKB-SubCell"/>
</dbReference>
<dbReference type="GO" id="GO:0003796">
    <property type="term" value="F:lysozyme activity"/>
    <property type="evidence" value="ECO:0000314"/>
    <property type="project" value="UniProtKB"/>
</dbReference>
<dbReference type="GO" id="GO:0051838">
    <property type="term" value="P:cytolysis by host of symbiont cells"/>
    <property type="evidence" value="ECO:0000314"/>
    <property type="project" value="UniProtKB"/>
</dbReference>
<dbReference type="GO" id="GO:0042742">
    <property type="term" value="P:defense response to bacterium"/>
    <property type="evidence" value="ECO:0007669"/>
    <property type="project" value="UniProtKB-KW"/>
</dbReference>
<dbReference type="Gene3D" id="1.10.530.10">
    <property type="match status" value="1"/>
</dbReference>
<dbReference type="InterPro" id="IPR008597">
    <property type="entry name" value="Invert_lysozyme"/>
</dbReference>
<dbReference type="InterPro" id="IPR023346">
    <property type="entry name" value="Lysozyme-like_dom_sf"/>
</dbReference>
<dbReference type="PANTHER" id="PTHR11195">
    <property type="entry name" value="DESTABILASE-RELATED"/>
    <property type="match status" value="1"/>
</dbReference>
<dbReference type="PANTHER" id="PTHR11195:SF13">
    <property type="entry name" value="INVERTEBRATE-TYPE LYSOZYME 2-RELATED"/>
    <property type="match status" value="1"/>
</dbReference>
<dbReference type="Pfam" id="PF05497">
    <property type="entry name" value="Destabilase"/>
    <property type="match status" value="1"/>
</dbReference>
<dbReference type="SUPFAM" id="SSF53955">
    <property type="entry name" value="Lysozyme-like"/>
    <property type="match status" value="1"/>
</dbReference>
<dbReference type="PROSITE" id="PS51909">
    <property type="entry name" value="LYSOZYME_I"/>
    <property type="match status" value="1"/>
</dbReference>
<gene>
    <name evidence="5" type="primary">lysoz2</name>
</gene>